<comment type="function">
    <text evidence="1">One of the primary rRNA binding proteins. Required for association of the 30S and 50S subunits to form the 70S ribosome, for tRNA binding and peptide bond formation. It has been suggested to have peptidyltransferase activity; this is somewhat controversial. Makes several contacts with the 16S rRNA in the 70S ribosome.</text>
</comment>
<comment type="subunit">
    <text evidence="1">Part of the 50S ribosomal subunit. Forms a bridge to the 30S subunit in the 70S ribosome.</text>
</comment>
<comment type="similarity">
    <text evidence="1">Belongs to the universal ribosomal protein uL2 family.</text>
</comment>
<gene>
    <name evidence="1" type="primary">rplB</name>
    <name type="ordered locus">Patl_0472</name>
</gene>
<keyword id="KW-0687">Ribonucleoprotein</keyword>
<keyword id="KW-0689">Ribosomal protein</keyword>
<keyword id="KW-0694">RNA-binding</keyword>
<keyword id="KW-0699">rRNA-binding</keyword>
<evidence type="ECO:0000255" key="1">
    <source>
        <dbReference type="HAMAP-Rule" id="MF_01320"/>
    </source>
</evidence>
<evidence type="ECO:0000256" key="2">
    <source>
        <dbReference type="SAM" id="MobiDB-lite"/>
    </source>
</evidence>
<evidence type="ECO:0000305" key="3"/>
<accession>Q15YN6</accession>
<name>RL2_PSEA6</name>
<dbReference type="EMBL" id="CP000388">
    <property type="protein sequence ID" value="ABG39002.1"/>
    <property type="molecule type" value="Genomic_DNA"/>
</dbReference>
<dbReference type="RefSeq" id="WP_006992671.1">
    <property type="nucleotide sequence ID" value="NC_008228.1"/>
</dbReference>
<dbReference type="SMR" id="Q15YN6"/>
<dbReference type="STRING" id="342610.Patl_0472"/>
<dbReference type="KEGG" id="pat:Patl_0472"/>
<dbReference type="eggNOG" id="COG0090">
    <property type="taxonomic scope" value="Bacteria"/>
</dbReference>
<dbReference type="HOGENOM" id="CLU_036235_2_1_6"/>
<dbReference type="OrthoDB" id="9778722at2"/>
<dbReference type="Proteomes" id="UP000001981">
    <property type="component" value="Chromosome"/>
</dbReference>
<dbReference type="GO" id="GO:0015934">
    <property type="term" value="C:large ribosomal subunit"/>
    <property type="evidence" value="ECO:0007669"/>
    <property type="project" value="InterPro"/>
</dbReference>
<dbReference type="GO" id="GO:0019843">
    <property type="term" value="F:rRNA binding"/>
    <property type="evidence" value="ECO:0007669"/>
    <property type="project" value="UniProtKB-UniRule"/>
</dbReference>
<dbReference type="GO" id="GO:0003735">
    <property type="term" value="F:structural constituent of ribosome"/>
    <property type="evidence" value="ECO:0007669"/>
    <property type="project" value="InterPro"/>
</dbReference>
<dbReference type="GO" id="GO:0016740">
    <property type="term" value="F:transferase activity"/>
    <property type="evidence" value="ECO:0007669"/>
    <property type="project" value="InterPro"/>
</dbReference>
<dbReference type="GO" id="GO:0002181">
    <property type="term" value="P:cytoplasmic translation"/>
    <property type="evidence" value="ECO:0007669"/>
    <property type="project" value="TreeGrafter"/>
</dbReference>
<dbReference type="FunFam" id="2.30.30.30:FF:000001">
    <property type="entry name" value="50S ribosomal protein L2"/>
    <property type="match status" value="1"/>
</dbReference>
<dbReference type="FunFam" id="2.40.50.140:FF:000003">
    <property type="entry name" value="50S ribosomal protein L2"/>
    <property type="match status" value="1"/>
</dbReference>
<dbReference type="FunFam" id="4.10.950.10:FF:000001">
    <property type="entry name" value="50S ribosomal protein L2"/>
    <property type="match status" value="1"/>
</dbReference>
<dbReference type="Gene3D" id="2.30.30.30">
    <property type="match status" value="1"/>
</dbReference>
<dbReference type="Gene3D" id="2.40.50.140">
    <property type="entry name" value="Nucleic acid-binding proteins"/>
    <property type="match status" value="1"/>
</dbReference>
<dbReference type="Gene3D" id="4.10.950.10">
    <property type="entry name" value="Ribosomal protein L2, domain 3"/>
    <property type="match status" value="1"/>
</dbReference>
<dbReference type="HAMAP" id="MF_01320_B">
    <property type="entry name" value="Ribosomal_uL2_B"/>
    <property type="match status" value="1"/>
</dbReference>
<dbReference type="InterPro" id="IPR012340">
    <property type="entry name" value="NA-bd_OB-fold"/>
</dbReference>
<dbReference type="InterPro" id="IPR014722">
    <property type="entry name" value="Rib_uL2_dom2"/>
</dbReference>
<dbReference type="InterPro" id="IPR002171">
    <property type="entry name" value="Ribosomal_uL2"/>
</dbReference>
<dbReference type="InterPro" id="IPR005880">
    <property type="entry name" value="Ribosomal_uL2_bac/org-type"/>
</dbReference>
<dbReference type="InterPro" id="IPR022669">
    <property type="entry name" value="Ribosomal_uL2_C"/>
</dbReference>
<dbReference type="InterPro" id="IPR022671">
    <property type="entry name" value="Ribosomal_uL2_CS"/>
</dbReference>
<dbReference type="InterPro" id="IPR014726">
    <property type="entry name" value="Ribosomal_uL2_dom3"/>
</dbReference>
<dbReference type="InterPro" id="IPR022666">
    <property type="entry name" value="Ribosomal_uL2_RNA-bd_dom"/>
</dbReference>
<dbReference type="InterPro" id="IPR008991">
    <property type="entry name" value="Translation_prot_SH3-like_sf"/>
</dbReference>
<dbReference type="NCBIfam" id="TIGR01171">
    <property type="entry name" value="rplB_bact"/>
    <property type="match status" value="1"/>
</dbReference>
<dbReference type="PANTHER" id="PTHR13691:SF5">
    <property type="entry name" value="LARGE RIBOSOMAL SUBUNIT PROTEIN UL2M"/>
    <property type="match status" value="1"/>
</dbReference>
<dbReference type="PANTHER" id="PTHR13691">
    <property type="entry name" value="RIBOSOMAL PROTEIN L2"/>
    <property type="match status" value="1"/>
</dbReference>
<dbReference type="Pfam" id="PF00181">
    <property type="entry name" value="Ribosomal_L2"/>
    <property type="match status" value="1"/>
</dbReference>
<dbReference type="Pfam" id="PF03947">
    <property type="entry name" value="Ribosomal_L2_C"/>
    <property type="match status" value="1"/>
</dbReference>
<dbReference type="PIRSF" id="PIRSF002158">
    <property type="entry name" value="Ribosomal_L2"/>
    <property type="match status" value="1"/>
</dbReference>
<dbReference type="SMART" id="SM01383">
    <property type="entry name" value="Ribosomal_L2"/>
    <property type="match status" value="1"/>
</dbReference>
<dbReference type="SMART" id="SM01382">
    <property type="entry name" value="Ribosomal_L2_C"/>
    <property type="match status" value="1"/>
</dbReference>
<dbReference type="SUPFAM" id="SSF50249">
    <property type="entry name" value="Nucleic acid-binding proteins"/>
    <property type="match status" value="1"/>
</dbReference>
<dbReference type="SUPFAM" id="SSF50104">
    <property type="entry name" value="Translation proteins SH3-like domain"/>
    <property type="match status" value="1"/>
</dbReference>
<dbReference type="PROSITE" id="PS00467">
    <property type="entry name" value="RIBOSOMAL_L2"/>
    <property type="match status" value="1"/>
</dbReference>
<organism>
    <name type="scientific">Pseudoalteromonas atlantica (strain T6c / ATCC BAA-1087)</name>
    <dbReference type="NCBI Taxonomy" id="3042615"/>
    <lineage>
        <taxon>Bacteria</taxon>
        <taxon>Pseudomonadati</taxon>
        <taxon>Pseudomonadota</taxon>
        <taxon>Gammaproteobacteria</taxon>
        <taxon>Alteromonadales</taxon>
        <taxon>Alteromonadaceae</taxon>
        <taxon>Paraglaciecola</taxon>
    </lineage>
</organism>
<proteinExistence type="inferred from homology"/>
<protein>
    <recommendedName>
        <fullName evidence="1">Large ribosomal subunit protein uL2</fullName>
    </recommendedName>
    <alternativeName>
        <fullName evidence="3">50S ribosomal protein L2</fullName>
    </alternativeName>
</protein>
<sequence>MPLLKAKPTSAGRRHVVQVVNPDLHKGAPYAPLLEKNSKSGGRNNNGRITVRHVGGGHKQHYRVIDFKRNKDGIPAKIERLEYDPNRSANICLVLYADGERRYILAPKGAKAGDQIQSGSDAAIKAGNSLPMRNIPVGTTVHAIEMKPGKGAQIARSAGQYAQILARAEGYVTLRLRSGEVRRVLADCRATIGEIGNAEHMLRSLGKAGANRWRGIRPTVRGVAMNPVDHPHGGGEGRTSGGRHPVSPWGVPTKGKKTRSNKRTDKLIVRRRNK</sequence>
<feature type="chain" id="PRO_0000309986" description="Large ribosomal subunit protein uL2">
    <location>
        <begin position="1"/>
        <end position="274"/>
    </location>
</feature>
<feature type="region of interest" description="Disordered" evidence="2">
    <location>
        <begin position="28"/>
        <end position="53"/>
    </location>
</feature>
<feature type="region of interest" description="Disordered" evidence="2">
    <location>
        <begin position="223"/>
        <end position="274"/>
    </location>
</feature>
<feature type="compositionally biased region" description="Low complexity" evidence="2">
    <location>
        <begin position="39"/>
        <end position="48"/>
    </location>
</feature>
<reference key="1">
    <citation type="submission" date="2006-06" db="EMBL/GenBank/DDBJ databases">
        <title>Complete sequence of Pseudoalteromonas atlantica T6c.</title>
        <authorList>
            <consortium name="US DOE Joint Genome Institute"/>
            <person name="Copeland A."/>
            <person name="Lucas S."/>
            <person name="Lapidus A."/>
            <person name="Barry K."/>
            <person name="Detter J.C."/>
            <person name="Glavina del Rio T."/>
            <person name="Hammon N."/>
            <person name="Israni S."/>
            <person name="Dalin E."/>
            <person name="Tice H."/>
            <person name="Pitluck S."/>
            <person name="Saunders E."/>
            <person name="Brettin T."/>
            <person name="Bruce D."/>
            <person name="Han C."/>
            <person name="Tapia R."/>
            <person name="Gilna P."/>
            <person name="Schmutz J."/>
            <person name="Larimer F."/>
            <person name="Land M."/>
            <person name="Hauser L."/>
            <person name="Kyrpides N."/>
            <person name="Kim E."/>
            <person name="Karls A.C."/>
            <person name="Bartlett D."/>
            <person name="Higgins B.P."/>
            <person name="Richardson P."/>
        </authorList>
    </citation>
    <scope>NUCLEOTIDE SEQUENCE [LARGE SCALE GENOMIC DNA]</scope>
    <source>
        <strain>T6c / ATCC BAA-1087</strain>
    </source>
</reference>